<accession>Q0S0P3</accession>
<protein>
    <recommendedName>
        <fullName evidence="1">Aspartate--tRNA(Asp/Asn) ligase</fullName>
        <ecNumber evidence="1">6.1.1.23</ecNumber>
    </recommendedName>
    <alternativeName>
        <fullName evidence="1">Aspartyl-tRNA synthetase</fullName>
        <shortName evidence="1">AspRS</shortName>
    </alternativeName>
    <alternativeName>
        <fullName evidence="1">Non-discriminating aspartyl-tRNA synthetase</fullName>
        <shortName evidence="1">ND-AspRS</shortName>
    </alternativeName>
</protein>
<proteinExistence type="inferred from homology"/>
<keyword id="KW-0030">Aminoacyl-tRNA synthetase</keyword>
<keyword id="KW-0067">ATP-binding</keyword>
<keyword id="KW-0963">Cytoplasm</keyword>
<keyword id="KW-0436">Ligase</keyword>
<keyword id="KW-0547">Nucleotide-binding</keyword>
<keyword id="KW-0648">Protein biosynthesis</keyword>
<reference key="1">
    <citation type="journal article" date="2006" name="Proc. Natl. Acad. Sci. U.S.A.">
        <title>The complete genome of Rhodococcus sp. RHA1 provides insights into a catabolic powerhouse.</title>
        <authorList>
            <person name="McLeod M.P."/>
            <person name="Warren R.L."/>
            <person name="Hsiao W.W.L."/>
            <person name="Araki N."/>
            <person name="Myhre M."/>
            <person name="Fernandes C."/>
            <person name="Miyazawa D."/>
            <person name="Wong W."/>
            <person name="Lillquist A.L."/>
            <person name="Wang D."/>
            <person name="Dosanjh M."/>
            <person name="Hara H."/>
            <person name="Petrescu A."/>
            <person name="Morin R.D."/>
            <person name="Yang G."/>
            <person name="Stott J.M."/>
            <person name="Schein J.E."/>
            <person name="Shin H."/>
            <person name="Smailus D."/>
            <person name="Siddiqui A.S."/>
            <person name="Marra M.A."/>
            <person name="Jones S.J.M."/>
            <person name="Holt R."/>
            <person name="Brinkman F.S.L."/>
            <person name="Miyauchi K."/>
            <person name="Fukuda M."/>
            <person name="Davies J.E."/>
            <person name="Mohn W.W."/>
            <person name="Eltis L.D."/>
        </authorList>
    </citation>
    <scope>NUCLEOTIDE SEQUENCE [LARGE SCALE GENOMIC DNA]</scope>
    <source>
        <strain>RHA1</strain>
    </source>
</reference>
<organism>
    <name type="scientific">Rhodococcus jostii (strain RHA1)</name>
    <dbReference type="NCBI Taxonomy" id="101510"/>
    <lineage>
        <taxon>Bacteria</taxon>
        <taxon>Bacillati</taxon>
        <taxon>Actinomycetota</taxon>
        <taxon>Actinomycetes</taxon>
        <taxon>Mycobacteriales</taxon>
        <taxon>Nocardiaceae</taxon>
        <taxon>Rhodococcus</taxon>
    </lineage>
</organism>
<sequence>MLRTHLAGSLRAEQAQQTVTLTGWVARRRDHGGVIFIDLRDASGVSQVVFREGAAAEQAHRLRAEYCVKVTGVVEVRPEGNQNFEIPTGAIEVNVTDLEVLNESAPLPFQLDDQAGEEARLKYRYLDLRREGPGHAIRLRSKVNAAARAVLAHHEFVEVETPTLTRSTPEGARDFLVPARLQPGSFYALPQSPQLFKQLLMVGGIERYYQIARCYRDEDFRADRQPEFTQLDIEMSFVNQDDVILLAEEVLSSLWKLVGHEIKTPIARMTYAEAMRRYGSDKPDLRFGVELVECAEFFKDTTFRVFQQEYVGAVVMPGGASQPRKQLDAWQEWAKQRGAKGLAYVLVGEDGTLGGPVAKNLTDTEREGLAAHVGAKPGDCIFFAAGTTKSSRALLGAARGEIARKQNLIDPDAWAFVWVVDAPLFEPTADATASGDVALGYSAWTAVHHAFTSPKPESIDTFDTDPGSALAYAYDIVCNGNEIGGGSIRIHRKDIQERVFKVMGISHEEAEEKFGFLLDAFAFGAPPHGGIAFGWDRITALLAGVDSIREVIAFPKSGGGVDPLTNAPAPITAQQRKESGVDAKPEPKGDAASAKPDAPADK</sequence>
<evidence type="ECO:0000255" key="1">
    <source>
        <dbReference type="HAMAP-Rule" id="MF_00044"/>
    </source>
</evidence>
<evidence type="ECO:0000256" key="2">
    <source>
        <dbReference type="SAM" id="MobiDB-lite"/>
    </source>
</evidence>
<comment type="function">
    <text evidence="1">Aspartyl-tRNA synthetase with relaxed tRNA specificity since it is able to aspartylate not only its cognate tRNA(Asp) but also tRNA(Asn). Reaction proceeds in two steps: L-aspartate is first activated by ATP to form Asp-AMP and then transferred to the acceptor end of tRNA(Asp/Asn).</text>
</comment>
<comment type="catalytic activity">
    <reaction evidence="1">
        <text>tRNA(Asx) + L-aspartate + ATP = L-aspartyl-tRNA(Asx) + AMP + diphosphate</text>
        <dbReference type="Rhea" id="RHEA:18349"/>
        <dbReference type="Rhea" id="RHEA-COMP:9710"/>
        <dbReference type="Rhea" id="RHEA-COMP:9711"/>
        <dbReference type="ChEBI" id="CHEBI:29991"/>
        <dbReference type="ChEBI" id="CHEBI:30616"/>
        <dbReference type="ChEBI" id="CHEBI:33019"/>
        <dbReference type="ChEBI" id="CHEBI:78442"/>
        <dbReference type="ChEBI" id="CHEBI:78516"/>
        <dbReference type="ChEBI" id="CHEBI:456215"/>
        <dbReference type="EC" id="6.1.1.23"/>
    </reaction>
</comment>
<comment type="subunit">
    <text evidence="1">Homodimer.</text>
</comment>
<comment type="subcellular location">
    <subcellularLocation>
        <location evidence="1">Cytoplasm</location>
    </subcellularLocation>
</comment>
<comment type="similarity">
    <text evidence="1">Belongs to the class-II aminoacyl-tRNA synthetase family. Type 1 subfamily.</text>
</comment>
<dbReference type="EC" id="6.1.1.23" evidence="1"/>
<dbReference type="EMBL" id="CP000431">
    <property type="protein sequence ID" value="ABG98893.1"/>
    <property type="molecule type" value="Genomic_DNA"/>
</dbReference>
<dbReference type="RefSeq" id="WP_011598851.1">
    <property type="nucleotide sequence ID" value="NC_008268.1"/>
</dbReference>
<dbReference type="SMR" id="Q0S0P3"/>
<dbReference type="KEGG" id="rha:RHA1_ro07129"/>
<dbReference type="PATRIC" id="fig|101510.16.peg.7182"/>
<dbReference type="eggNOG" id="COG0173">
    <property type="taxonomic scope" value="Bacteria"/>
</dbReference>
<dbReference type="HOGENOM" id="CLU_014330_3_2_11"/>
<dbReference type="OrthoDB" id="9802326at2"/>
<dbReference type="Proteomes" id="UP000008710">
    <property type="component" value="Chromosome"/>
</dbReference>
<dbReference type="GO" id="GO:0005737">
    <property type="term" value="C:cytoplasm"/>
    <property type="evidence" value="ECO:0007669"/>
    <property type="project" value="UniProtKB-SubCell"/>
</dbReference>
<dbReference type="GO" id="GO:0004815">
    <property type="term" value="F:aspartate-tRNA ligase activity"/>
    <property type="evidence" value="ECO:0007669"/>
    <property type="project" value="UniProtKB-UniRule"/>
</dbReference>
<dbReference type="GO" id="GO:0050560">
    <property type="term" value="F:aspartate-tRNA(Asn) ligase activity"/>
    <property type="evidence" value="ECO:0007669"/>
    <property type="project" value="UniProtKB-EC"/>
</dbReference>
<dbReference type="GO" id="GO:0005524">
    <property type="term" value="F:ATP binding"/>
    <property type="evidence" value="ECO:0007669"/>
    <property type="project" value="UniProtKB-UniRule"/>
</dbReference>
<dbReference type="GO" id="GO:0003676">
    <property type="term" value="F:nucleic acid binding"/>
    <property type="evidence" value="ECO:0007669"/>
    <property type="project" value="InterPro"/>
</dbReference>
<dbReference type="GO" id="GO:0006422">
    <property type="term" value="P:aspartyl-tRNA aminoacylation"/>
    <property type="evidence" value="ECO:0007669"/>
    <property type="project" value="UniProtKB-UniRule"/>
</dbReference>
<dbReference type="CDD" id="cd00777">
    <property type="entry name" value="AspRS_core"/>
    <property type="match status" value="1"/>
</dbReference>
<dbReference type="CDD" id="cd04317">
    <property type="entry name" value="EcAspRS_like_N"/>
    <property type="match status" value="1"/>
</dbReference>
<dbReference type="Gene3D" id="3.30.930.10">
    <property type="entry name" value="Bira Bifunctional Protein, Domain 2"/>
    <property type="match status" value="1"/>
</dbReference>
<dbReference type="Gene3D" id="3.30.1360.30">
    <property type="entry name" value="GAD-like domain"/>
    <property type="match status" value="1"/>
</dbReference>
<dbReference type="Gene3D" id="2.40.50.140">
    <property type="entry name" value="Nucleic acid-binding proteins"/>
    <property type="match status" value="1"/>
</dbReference>
<dbReference type="HAMAP" id="MF_00044">
    <property type="entry name" value="Asp_tRNA_synth_type1"/>
    <property type="match status" value="1"/>
</dbReference>
<dbReference type="InterPro" id="IPR004364">
    <property type="entry name" value="Aa-tRNA-synt_II"/>
</dbReference>
<dbReference type="InterPro" id="IPR006195">
    <property type="entry name" value="aa-tRNA-synth_II"/>
</dbReference>
<dbReference type="InterPro" id="IPR045864">
    <property type="entry name" value="aa-tRNA-synth_II/BPL/LPL"/>
</dbReference>
<dbReference type="InterPro" id="IPR004524">
    <property type="entry name" value="Asp-tRNA-ligase_1"/>
</dbReference>
<dbReference type="InterPro" id="IPR047089">
    <property type="entry name" value="Asp-tRNA-ligase_1_N"/>
</dbReference>
<dbReference type="InterPro" id="IPR002312">
    <property type="entry name" value="Asp/Asn-tRNA-synth_IIb"/>
</dbReference>
<dbReference type="InterPro" id="IPR047090">
    <property type="entry name" value="AspRS_core"/>
</dbReference>
<dbReference type="InterPro" id="IPR004115">
    <property type="entry name" value="GAD-like_sf"/>
</dbReference>
<dbReference type="InterPro" id="IPR029351">
    <property type="entry name" value="GAD_dom"/>
</dbReference>
<dbReference type="InterPro" id="IPR012340">
    <property type="entry name" value="NA-bd_OB-fold"/>
</dbReference>
<dbReference type="InterPro" id="IPR004365">
    <property type="entry name" value="NA-bd_OB_tRNA"/>
</dbReference>
<dbReference type="NCBIfam" id="TIGR00459">
    <property type="entry name" value="aspS_bact"/>
    <property type="match status" value="1"/>
</dbReference>
<dbReference type="NCBIfam" id="NF001750">
    <property type="entry name" value="PRK00476.1"/>
    <property type="match status" value="1"/>
</dbReference>
<dbReference type="PANTHER" id="PTHR22594:SF5">
    <property type="entry name" value="ASPARTATE--TRNA LIGASE, MITOCHONDRIAL"/>
    <property type="match status" value="1"/>
</dbReference>
<dbReference type="PANTHER" id="PTHR22594">
    <property type="entry name" value="ASPARTYL/LYSYL-TRNA SYNTHETASE"/>
    <property type="match status" value="1"/>
</dbReference>
<dbReference type="Pfam" id="PF02938">
    <property type="entry name" value="GAD"/>
    <property type="match status" value="1"/>
</dbReference>
<dbReference type="Pfam" id="PF00152">
    <property type="entry name" value="tRNA-synt_2"/>
    <property type="match status" value="1"/>
</dbReference>
<dbReference type="Pfam" id="PF01336">
    <property type="entry name" value="tRNA_anti-codon"/>
    <property type="match status" value="1"/>
</dbReference>
<dbReference type="PRINTS" id="PR01042">
    <property type="entry name" value="TRNASYNTHASP"/>
</dbReference>
<dbReference type="SUPFAM" id="SSF55681">
    <property type="entry name" value="Class II aaRS and biotin synthetases"/>
    <property type="match status" value="1"/>
</dbReference>
<dbReference type="SUPFAM" id="SSF55261">
    <property type="entry name" value="GAD domain-like"/>
    <property type="match status" value="1"/>
</dbReference>
<dbReference type="SUPFAM" id="SSF50249">
    <property type="entry name" value="Nucleic acid-binding proteins"/>
    <property type="match status" value="1"/>
</dbReference>
<dbReference type="PROSITE" id="PS50862">
    <property type="entry name" value="AA_TRNA_LIGASE_II"/>
    <property type="match status" value="1"/>
</dbReference>
<name>SYDND_RHOJR</name>
<feature type="chain" id="PRO_1000006744" description="Aspartate--tRNA(Asp/Asn) ligase">
    <location>
        <begin position="1"/>
        <end position="602"/>
    </location>
</feature>
<feature type="region of interest" description="Aspartate" evidence="1">
    <location>
        <begin position="194"/>
        <end position="197"/>
    </location>
</feature>
<feature type="region of interest" description="Disordered" evidence="2">
    <location>
        <begin position="559"/>
        <end position="602"/>
    </location>
</feature>
<feature type="compositionally biased region" description="Basic and acidic residues" evidence="2">
    <location>
        <begin position="575"/>
        <end position="589"/>
    </location>
</feature>
<feature type="compositionally biased region" description="Low complexity" evidence="2">
    <location>
        <begin position="590"/>
        <end position="602"/>
    </location>
</feature>
<feature type="binding site" evidence="1">
    <location>
        <position position="170"/>
    </location>
    <ligand>
        <name>L-aspartate</name>
        <dbReference type="ChEBI" id="CHEBI:29991"/>
    </ligand>
</feature>
<feature type="binding site" evidence="1">
    <location>
        <begin position="216"/>
        <end position="218"/>
    </location>
    <ligand>
        <name>ATP</name>
        <dbReference type="ChEBI" id="CHEBI:30616"/>
    </ligand>
</feature>
<feature type="binding site" evidence="1">
    <location>
        <position position="216"/>
    </location>
    <ligand>
        <name>L-aspartate</name>
        <dbReference type="ChEBI" id="CHEBI:29991"/>
    </ligand>
</feature>
<feature type="binding site" evidence="1">
    <location>
        <position position="225"/>
    </location>
    <ligand>
        <name>ATP</name>
        <dbReference type="ChEBI" id="CHEBI:30616"/>
    </ligand>
</feature>
<feature type="binding site" evidence="1">
    <location>
        <position position="448"/>
    </location>
    <ligand>
        <name>L-aspartate</name>
        <dbReference type="ChEBI" id="CHEBI:29991"/>
    </ligand>
</feature>
<feature type="binding site" evidence="1">
    <location>
        <position position="482"/>
    </location>
    <ligand>
        <name>ATP</name>
        <dbReference type="ChEBI" id="CHEBI:30616"/>
    </ligand>
</feature>
<feature type="binding site" evidence="1">
    <location>
        <position position="489"/>
    </location>
    <ligand>
        <name>L-aspartate</name>
        <dbReference type="ChEBI" id="CHEBI:29991"/>
    </ligand>
</feature>
<feature type="binding site" evidence="1">
    <location>
        <begin position="534"/>
        <end position="537"/>
    </location>
    <ligand>
        <name>ATP</name>
        <dbReference type="ChEBI" id="CHEBI:30616"/>
    </ligand>
</feature>
<feature type="site" description="Important for tRNA non-discrimination" evidence="1">
    <location>
        <position position="31"/>
    </location>
</feature>
<feature type="site" description="Important for tRNA non-discrimination" evidence="1">
    <location>
        <position position="80"/>
    </location>
</feature>
<gene>
    <name evidence="1" type="primary">aspS</name>
    <name type="ordered locus">RHA1_ro07129</name>
</gene>